<feature type="chain" id="PRO_0000182171" description="UDP-N-acetylmuramate--L-alanine ligase">
    <location>
        <begin position="1"/>
        <end position="442"/>
    </location>
</feature>
<feature type="binding site" evidence="1">
    <location>
        <begin position="109"/>
        <end position="115"/>
    </location>
    <ligand>
        <name>ATP</name>
        <dbReference type="ChEBI" id="CHEBI:30616"/>
    </ligand>
</feature>
<protein>
    <recommendedName>
        <fullName evidence="1">UDP-N-acetylmuramate--L-alanine ligase</fullName>
        <ecNumber evidence="1">6.3.2.8</ecNumber>
    </recommendedName>
    <alternativeName>
        <fullName evidence="1">UDP-N-acetylmuramoyl-L-alanine synthetase</fullName>
    </alternativeName>
</protein>
<keyword id="KW-0067">ATP-binding</keyword>
<keyword id="KW-0131">Cell cycle</keyword>
<keyword id="KW-0132">Cell division</keyword>
<keyword id="KW-0133">Cell shape</keyword>
<keyword id="KW-0961">Cell wall biogenesis/degradation</keyword>
<keyword id="KW-0963">Cytoplasm</keyword>
<keyword id="KW-0436">Ligase</keyword>
<keyword id="KW-0547">Nucleotide-binding</keyword>
<keyword id="KW-0573">Peptidoglycan synthesis</keyword>
<dbReference type="EC" id="6.3.2.8" evidence="1"/>
<dbReference type="EMBL" id="AE009949">
    <property type="protein sequence ID" value="AAL97144.1"/>
    <property type="molecule type" value="Genomic_DNA"/>
</dbReference>
<dbReference type="RefSeq" id="WP_011017401.1">
    <property type="nucleotide sequence ID" value="NC_003485.1"/>
</dbReference>
<dbReference type="SMR" id="Q8P2E1"/>
<dbReference type="KEGG" id="spm:spyM18_0398"/>
<dbReference type="HOGENOM" id="CLU_028104_1_0_9"/>
<dbReference type="UniPathway" id="UPA00219"/>
<dbReference type="GO" id="GO:0005737">
    <property type="term" value="C:cytoplasm"/>
    <property type="evidence" value="ECO:0007669"/>
    <property type="project" value="UniProtKB-SubCell"/>
</dbReference>
<dbReference type="GO" id="GO:0005524">
    <property type="term" value="F:ATP binding"/>
    <property type="evidence" value="ECO:0007669"/>
    <property type="project" value="UniProtKB-UniRule"/>
</dbReference>
<dbReference type="GO" id="GO:0008763">
    <property type="term" value="F:UDP-N-acetylmuramate-L-alanine ligase activity"/>
    <property type="evidence" value="ECO:0007669"/>
    <property type="project" value="UniProtKB-UniRule"/>
</dbReference>
<dbReference type="GO" id="GO:0051301">
    <property type="term" value="P:cell division"/>
    <property type="evidence" value="ECO:0007669"/>
    <property type="project" value="UniProtKB-KW"/>
</dbReference>
<dbReference type="GO" id="GO:0071555">
    <property type="term" value="P:cell wall organization"/>
    <property type="evidence" value="ECO:0007669"/>
    <property type="project" value="UniProtKB-KW"/>
</dbReference>
<dbReference type="GO" id="GO:0009252">
    <property type="term" value="P:peptidoglycan biosynthetic process"/>
    <property type="evidence" value="ECO:0007669"/>
    <property type="project" value="UniProtKB-UniRule"/>
</dbReference>
<dbReference type="GO" id="GO:0008360">
    <property type="term" value="P:regulation of cell shape"/>
    <property type="evidence" value="ECO:0007669"/>
    <property type="project" value="UniProtKB-KW"/>
</dbReference>
<dbReference type="Gene3D" id="3.90.190.20">
    <property type="entry name" value="Mur ligase, C-terminal domain"/>
    <property type="match status" value="1"/>
</dbReference>
<dbReference type="Gene3D" id="3.40.1190.10">
    <property type="entry name" value="Mur-like, catalytic domain"/>
    <property type="match status" value="1"/>
</dbReference>
<dbReference type="Gene3D" id="3.40.50.720">
    <property type="entry name" value="NAD(P)-binding Rossmann-like Domain"/>
    <property type="match status" value="1"/>
</dbReference>
<dbReference type="HAMAP" id="MF_00046">
    <property type="entry name" value="MurC"/>
    <property type="match status" value="1"/>
</dbReference>
<dbReference type="InterPro" id="IPR036565">
    <property type="entry name" value="Mur-like_cat_sf"/>
</dbReference>
<dbReference type="InterPro" id="IPR004101">
    <property type="entry name" value="Mur_ligase_C"/>
</dbReference>
<dbReference type="InterPro" id="IPR036615">
    <property type="entry name" value="Mur_ligase_C_dom_sf"/>
</dbReference>
<dbReference type="InterPro" id="IPR013221">
    <property type="entry name" value="Mur_ligase_cen"/>
</dbReference>
<dbReference type="InterPro" id="IPR000713">
    <property type="entry name" value="Mur_ligase_N"/>
</dbReference>
<dbReference type="InterPro" id="IPR050061">
    <property type="entry name" value="MurCDEF_pg_biosynth"/>
</dbReference>
<dbReference type="InterPro" id="IPR005758">
    <property type="entry name" value="UDP-N-AcMur_Ala_ligase_MurC"/>
</dbReference>
<dbReference type="NCBIfam" id="TIGR01082">
    <property type="entry name" value="murC"/>
    <property type="match status" value="1"/>
</dbReference>
<dbReference type="PANTHER" id="PTHR43445:SF3">
    <property type="entry name" value="UDP-N-ACETYLMURAMATE--L-ALANINE LIGASE"/>
    <property type="match status" value="1"/>
</dbReference>
<dbReference type="PANTHER" id="PTHR43445">
    <property type="entry name" value="UDP-N-ACETYLMURAMATE--L-ALANINE LIGASE-RELATED"/>
    <property type="match status" value="1"/>
</dbReference>
<dbReference type="Pfam" id="PF01225">
    <property type="entry name" value="Mur_ligase"/>
    <property type="match status" value="1"/>
</dbReference>
<dbReference type="Pfam" id="PF02875">
    <property type="entry name" value="Mur_ligase_C"/>
    <property type="match status" value="1"/>
</dbReference>
<dbReference type="Pfam" id="PF08245">
    <property type="entry name" value="Mur_ligase_M"/>
    <property type="match status" value="1"/>
</dbReference>
<dbReference type="SUPFAM" id="SSF51984">
    <property type="entry name" value="MurCD N-terminal domain"/>
    <property type="match status" value="1"/>
</dbReference>
<dbReference type="SUPFAM" id="SSF53623">
    <property type="entry name" value="MurD-like peptide ligases, catalytic domain"/>
    <property type="match status" value="1"/>
</dbReference>
<dbReference type="SUPFAM" id="SSF53244">
    <property type="entry name" value="MurD-like peptide ligases, peptide-binding domain"/>
    <property type="match status" value="1"/>
</dbReference>
<gene>
    <name evidence="1" type="primary">murC</name>
    <name type="ordered locus">spyM18_0398</name>
</gene>
<reference key="1">
    <citation type="journal article" date="2002" name="Proc. Natl. Acad. Sci. U.S.A.">
        <title>Genome sequence and comparative microarray analysis of serotype M18 group A Streptococcus strains associated with acute rheumatic fever outbreaks.</title>
        <authorList>
            <person name="Smoot J.C."/>
            <person name="Barbian K.D."/>
            <person name="Van Gompel J.J."/>
            <person name="Smoot L.M."/>
            <person name="Chaussee M.S."/>
            <person name="Sylva G.L."/>
            <person name="Sturdevant D.E."/>
            <person name="Ricklefs S.M."/>
            <person name="Porcella S.F."/>
            <person name="Parkins L.D."/>
            <person name="Beres S.B."/>
            <person name="Campbell D.S."/>
            <person name="Smith T.M."/>
            <person name="Zhang Q."/>
            <person name="Kapur V."/>
            <person name="Daly J.A."/>
            <person name="Veasy L.G."/>
            <person name="Musser J.M."/>
        </authorList>
    </citation>
    <scope>NUCLEOTIDE SEQUENCE [LARGE SCALE GENOMIC DNA]</scope>
    <source>
        <strain>MGAS8232</strain>
    </source>
</reference>
<evidence type="ECO:0000255" key="1">
    <source>
        <dbReference type="HAMAP-Rule" id="MF_00046"/>
    </source>
</evidence>
<name>MURC_STRP8</name>
<comment type="function">
    <text evidence="1">Cell wall formation.</text>
</comment>
<comment type="catalytic activity">
    <reaction evidence="1">
        <text>UDP-N-acetyl-alpha-D-muramate + L-alanine + ATP = UDP-N-acetyl-alpha-D-muramoyl-L-alanine + ADP + phosphate + H(+)</text>
        <dbReference type="Rhea" id="RHEA:23372"/>
        <dbReference type="ChEBI" id="CHEBI:15378"/>
        <dbReference type="ChEBI" id="CHEBI:30616"/>
        <dbReference type="ChEBI" id="CHEBI:43474"/>
        <dbReference type="ChEBI" id="CHEBI:57972"/>
        <dbReference type="ChEBI" id="CHEBI:70757"/>
        <dbReference type="ChEBI" id="CHEBI:83898"/>
        <dbReference type="ChEBI" id="CHEBI:456216"/>
        <dbReference type="EC" id="6.3.2.8"/>
    </reaction>
</comment>
<comment type="pathway">
    <text evidence="1">Cell wall biogenesis; peptidoglycan biosynthesis.</text>
</comment>
<comment type="subcellular location">
    <subcellularLocation>
        <location evidence="1">Cytoplasm</location>
    </subcellularLocation>
</comment>
<comment type="similarity">
    <text evidence="1">Belongs to the MurCDEF family.</text>
</comment>
<sequence length="442" mass="49583">MSKTYHFIGIKGSGMSALALMLHQMGHMVQGSDVEKYYFTQRGLEQAGITILPFSEDNITPDMELIVGNAFRENNKEVAYALRHQIPFKRYHDFLGDFMKSFISFAVAGAHGKTSTTGLLSHVLKNITDTSYLIGDGTGRGSANAQYFVFESDEYERHFMPYHPEYSIITNIDFDHPDYFTGIADVRNAFNDYAKQVKKALFVYGEDDELKKIEAPAPIYYYGFEEGNDFIAYDITRTTNGSDFKVKHQGEVIGQFHVPAYGKHNILNATAVIANLFVAGIDMALVADHLKTFSGVKRRFTEKIVNDTIIIDDFAHHPTEIVATIDAARQKYPSKEIVAIFQPHTFTRTIALLEDFACALNEADSVYLAQIYGSAREVDKGEVKVEDLAAKIIKPSQVVTVENVSPLLDHDNAVYVFMGAGDIQLYEHSFEELLANLTKNNQ</sequence>
<organism>
    <name type="scientific">Streptococcus pyogenes serotype M18 (strain MGAS8232)</name>
    <dbReference type="NCBI Taxonomy" id="186103"/>
    <lineage>
        <taxon>Bacteria</taxon>
        <taxon>Bacillati</taxon>
        <taxon>Bacillota</taxon>
        <taxon>Bacilli</taxon>
        <taxon>Lactobacillales</taxon>
        <taxon>Streptococcaceae</taxon>
        <taxon>Streptococcus</taxon>
    </lineage>
</organism>
<proteinExistence type="inferred from homology"/>
<accession>Q8P2E1</accession>